<reference key="1">
    <citation type="journal article" date="2006" name="J. Bacteriol.">
        <title>Living with genome instability: the adaptation of phytoplasmas to diverse environments of their insect and plant hosts.</title>
        <authorList>
            <person name="Bai X."/>
            <person name="Zhang J."/>
            <person name="Ewing A."/>
            <person name="Miller S.A."/>
            <person name="Jancso Radek A."/>
            <person name="Shevchenko D.V."/>
            <person name="Tsukerman K."/>
            <person name="Walunas T."/>
            <person name="Lapidus A."/>
            <person name="Campbell J.W."/>
            <person name="Hogenhout S.A."/>
        </authorList>
    </citation>
    <scope>NUCLEOTIDE SEQUENCE [LARGE SCALE GENOMIC DNA]</scope>
    <source>
        <strain>AYWB</strain>
    </source>
</reference>
<sequence length="181" mass="20311">MSIKKENTLDYSKITATLMKTFNYKSVMQVPKVDKVVINMGVGDAIFNVKVLDDVVEELKLLSGQSPVITKAKKAISNFKLREGMPIGAKVTLRGARKEAFLYKLTRLVLPRVRDFRGISGKSFDGRGNYALGLKEQIVFPEINIDKVKKIRGMDIIIVTTAKNNTQAKKLLELYGMPFKN</sequence>
<dbReference type="EMBL" id="CP000061">
    <property type="protein sequence ID" value="ABC65627.1"/>
    <property type="molecule type" value="Genomic_DNA"/>
</dbReference>
<dbReference type="RefSeq" id="WP_011412789.1">
    <property type="nucleotide sequence ID" value="NC_007716.1"/>
</dbReference>
<dbReference type="SMR" id="Q2NIW6"/>
<dbReference type="STRING" id="322098.AYWB_510"/>
<dbReference type="KEGG" id="ayw:AYWB_510"/>
<dbReference type="eggNOG" id="COG0094">
    <property type="taxonomic scope" value="Bacteria"/>
</dbReference>
<dbReference type="HOGENOM" id="CLU_061015_2_1_14"/>
<dbReference type="PhylomeDB" id="Q2NIW6"/>
<dbReference type="Proteomes" id="UP000001934">
    <property type="component" value="Chromosome"/>
</dbReference>
<dbReference type="GO" id="GO:1990904">
    <property type="term" value="C:ribonucleoprotein complex"/>
    <property type="evidence" value="ECO:0007669"/>
    <property type="project" value="UniProtKB-KW"/>
</dbReference>
<dbReference type="GO" id="GO:0005840">
    <property type="term" value="C:ribosome"/>
    <property type="evidence" value="ECO:0007669"/>
    <property type="project" value="UniProtKB-KW"/>
</dbReference>
<dbReference type="GO" id="GO:0019843">
    <property type="term" value="F:rRNA binding"/>
    <property type="evidence" value="ECO:0007669"/>
    <property type="project" value="UniProtKB-UniRule"/>
</dbReference>
<dbReference type="GO" id="GO:0003735">
    <property type="term" value="F:structural constituent of ribosome"/>
    <property type="evidence" value="ECO:0007669"/>
    <property type="project" value="InterPro"/>
</dbReference>
<dbReference type="GO" id="GO:0000049">
    <property type="term" value="F:tRNA binding"/>
    <property type="evidence" value="ECO:0007669"/>
    <property type="project" value="UniProtKB-UniRule"/>
</dbReference>
<dbReference type="GO" id="GO:0006412">
    <property type="term" value="P:translation"/>
    <property type="evidence" value="ECO:0007669"/>
    <property type="project" value="UniProtKB-UniRule"/>
</dbReference>
<dbReference type="FunFam" id="3.30.1440.10:FF:000001">
    <property type="entry name" value="50S ribosomal protein L5"/>
    <property type="match status" value="1"/>
</dbReference>
<dbReference type="Gene3D" id="3.30.1440.10">
    <property type="match status" value="1"/>
</dbReference>
<dbReference type="HAMAP" id="MF_01333_B">
    <property type="entry name" value="Ribosomal_uL5_B"/>
    <property type="match status" value="1"/>
</dbReference>
<dbReference type="InterPro" id="IPR002132">
    <property type="entry name" value="Ribosomal_uL5"/>
</dbReference>
<dbReference type="InterPro" id="IPR020930">
    <property type="entry name" value="Ribosomal_uL5_bac-type"/>
</dbReference>
<dbReference type="InterPro" id="IPR031309">
    <property type="entry name" value="Ribosomal_uL5_C"/>
</dbReference>
<dbReference type="InterPro" id="IPR020929">
    <property type="entry name" value="Ribosomal_uL5_CS"/>
</dbReference>
<dbReference type="InterPro" id="IPR022803">
    <property type="entry name" value="Ribosomal_uL5_dom_sf"/>
</dbReference>
<dbReference type="InterPro" id="IPR031310">
    <property type="entry name" value="Ribosomal_uL5_N"/>
</dbReference>
<dbReference type="NCBIfam" id="NF000585">
    <property type="entry name" value="PRK00010.1"/>
    <property type="match status" value="1"/>
</dbReference>
<dbReference type="PANTHER" id="PTHR11994">
    <property type="entry name" value="60S RIBOSOMAL PROTEIN L11-RELATED"/>
    <property type="match status" value="1"/>
</dbReference>
<dbReference type="Pfam" id="PF00281">
    <property type="entry name" value="Ribosomal_L5"/>
    <property type="match status" value="1"/>
</dbReference>
<dbReference type="Pfam" id="PF00673">
    <property type="entry name" value="Ribosomal_L5_C"/>
    <property type="match status" value="1"/>
</dbReference>
<dbReference type="PIRSF" id="PIRSF002161">
    <property type="entry name" value="Ribosomal_L5"/>
    <property type="match status" value="1"/>
</dbReference>
<dbReference type="SUPFAM" id="SSF55282">
    <property type="entry name" value="RL5-like"/>
    <property type="match status" value="1"/>
</dbReference>
<dbReference type="PROSITE" id="PS00358">
    <property type="entry name" value="RIBOSOMAL_L5"/>
    <property type="match status" value="1"/>
</dbReference>
<name>RL5_AYWBP</name>
<proteinExistence type="inferred from homology"/>
<keyword id="KW-0687">Ribonucleoprotein</keyword>
<keyword id="KW-0689">Ribosomal protein</keyword>
<keyword id="KW-0694">RNA-binding</keyword>
<keyword id="KW-0699">rRNA-binding</keyword>
<keyword id="KW-0820">tRNA-binding</keyword>
<feature type="chain" id="PRO_0000242963" description="Large ribosomal subunit protein uL5">
    <location>
        <begin position="1"/>
        <end position="181"/>
    </location>
</feature>
<protein>
    <recommendedName>
        <fullName evidence="1">Large ribosomal subunit protein uL5</fullName>
    </recommendedName>
    <alternativeName>
        <fullName evidence="2">50S ribosomal protein L5</fullName>
    </alternativeName>
</protein>
<evidence type="ECO:0000255" key="1">
    <source>
        <dbReference type="HAMAP-Rule" id="MF_01333"/>
    </source>
</evidence>
<evidence type="ECO:0000305" key="2"/>
<comment type="function">
    <text evidence="1">This is one of the proteins that bind and probably mediate the attachment of the 5S RNA into the large ribosomal subunit, where it forms part of the central protuberance. In the 70S ribosome it contacts protein S13 of the 30S subunit (bridge B1b), connecting the 2 subunits; this bridge is implicated in subunit movement. Contacts the P site tRNA; the 5S rRNA and some of its associated proteins might help stabilize positioning of ribosome-bound tRNAs.</text>
</comment>
<comment type="subunit">
    <text evidence="1">Part of the 50S ribosomal subunit; part of the 5S rRNA/L5/L18/L25 subcomplex. Contacts the 5S rRNA and the P site tRNA. Forms a bridge to the 30S subunit in the 70S ribosome.</text>
</comment>
<comment type="similarity">
    <text evidence="1">Belongs to the universal ribosomal protein uL5 family.</text>
</comment>
<accession>Q2NIW6</accession>
<organism>
    <name type="scientific">Aster yellows witches'-broom phytoplasma (strain AYWB)</name>
    <dbReference type="NCBI Taxonomy" id="322098"/>
    <lineage>
        <taxon>Bacteria</taxon>
        <taxon>Bacillati</taxon>
        <taxon>Mycoplasmatota</taxon>
        <taxon>Mollicutes</taxon>
        <taxon>Acholeplasmatales</taxon>
        <taxon>Acholeplasmataceae</taxon>
        <taxon>Candidatus Phytoplasma</taxon>
        <taxon>16SrI (Aster yellows group)</taxon>
    </lineage>
</organism>
<gene>
    <name evidence="1" type="primary">rplE</name>
    <name type="ordered locus">AYWB_510</name>
</gene>